<evidence type="ECO:0000255" key="1">
    <source>
        <dbReference type="PROSITE-ProRule" id="PRU00298"/>
    </source>
</evidence>
<evidence type="ECO:0000269" key="2">
    <source>
    </source>
</evidence>
<evidence type="ECO:0000269" key="3">
    <source>
    </source>
</evidence>
<evidence type="ECO:0000269" key="4">
    <source>
    </source>
</evidence>
<evidence type="ECO:0000269" key="5">
    <source>
    </source>
</evidence>
<evidence type="ECO:0000269" key="6">
    <source>
    </source>
</evidence>
<evidence type="ECO:0000269" key="7">
    <source>
    </source>
</evidence>
<evidence type="ECO:0000269" key="8">
    <source>
    </source>
</evidence>
<evidence type="ECO:0000269" key="9">
    <source>
    </source>
</evidence>
<evidence type="ECO:0000269" key="10">
    <source>
    </source>
</evidence>
<evidence type="ECO:0000269" key="11">
    <source>
    </source>
</evidence>
<evidence type="ECO:0000269" key="12">
    <source>
    </source>
</evidence>
<evidence type="ECO:0000269" key="13">
    <source>
    </source>
</evidence>
<evidence type="ECO:0000269" key="14">
    <source>
    </source>
</evidence>
<evidence type="ECO:0000269" key="15">
    <source>
    </source>
</evidence>
<evidence type="ECO:0000269" key="16">
    <source>
    </source>
</evidence>
<evidence type="ECO:0000269" key="17">
    <source>
    </source>
</evidence>
<evidence type="ECO:0000269" key="18">
    <source>
    </source>
</evidence>
<evidence type="ECO:0000269" key="19">
    <source>
    </source>
</evidence>
<evidence type="ECO:0000269" key="20">
    <source ref="9"/>
</evidence>
<evidence type="ECO:0000303" key="21">
    <source>
    </source>
</evidence>
<evidence type="ECO:0000305" key="22"/>
<evidence type="ECO:0000312" key="23">
    <source>
        <dbReference type="HGNC" id="HGNC:7218"/>
    </source>
</evidence>
<evidence type="ECO:0007744" key="24">
    <source>
        <dbReference type="PDB" id="1CXP"/>
    </source>
</evidence>
<evidence type="ECO:0007744" key="25">
    <source>
        <dbReference type="PDB" id="1D2V"/>
    </source>
</evidence>
<evidence type="ECO:0007744" key="26">
    <source>
        <dbReference type="PDB" id="1D5L"/>
    </source>
</evidence>
<evidence type="ECO:0007744" key="27">
    <source>
        <dbReference type="PDB" id="1D7W"/>
    </source>
</evidence>
<evidence type="ECO:0007744" key="28">
    <source>
        <dbReference type="PDB" id="1DNU"/>
    </source>
</evidence>
<evidence type="ECO:0007744" key="29">
    <source>
        <dbReference type="PDB" id="1DNW"/>
    </source>
</evidence>
<evidence type="ECO:0007744" key="30">
    <source>
        <dbReference type="PDB" id="1MHL"/>
    </source>
</evidence>
<evidence type="ECO:0007744" key="31">
    <source>
        <dbReference type="PDB" id="4EJX"/>
    </source>
</evidence>
<evidence type="ECO:0007829" key="32">
    <source>
        <dbReference type="PDB" id="1D2V"/>
    </source>
</evidence>
<evidence type="ECO:0007829" key="33">
    <source>
        <dbReference type="PDB" id="1MYP"/>
    </source>
</evidence>
<evidence type="ECO:0007829" key="34">
    <source>
        <dbReference type="PDB" id="5MFA"/>
    </source>
</evidence>
<gene>
    <name evidence="23" type="primary">MPO</name>
</gene>
<proteinExistence type="evidence at protein level"/>
<accession>P05164</accession>
<accession>A1L4B8</accession>
<accession>Q14862</accession>
<accession>Q4PJH5</accession>
<accession>Q9UCL7</accession>
<comment type="function">
    <text evidence="11 19">Part of the host defense system of polymorphonuclear leukocytes. It is responsible for microbicidal activity against a wide range of organisms. In the stimulated PMN, MPO catalyzes the production of hypohalous acids, primarily hypochlorous acid in physiologic situations, and other toxic intermediates that greatly enhance PMN microbicidal activity (PubMed:9922160). Mediates the proteolytic cleavage of alpha-1-microglobulin to form t-alpha-1-microglobulin, which potently inhibits oxidation of low-density lipoprotein particles and limits vascular damage (PubMed:25698971).</text>
</comment>
<comment type="catalytic activity">
    <reaction evidence="19">
        <text>chloride + H2O2 + H(+) = hypochlorous acid + H2O</text>
        <dbReference type="Rhea" id="RHEA:28218"/>
        <dbReference type="ChEBI" id="CHEBI:15377"/>
        <dbReference type="ChEBI" id="CHEBI:15378"/>
        <dbReference type="ChEBI" id="CHEBI:16240"/>
        <dbReference type="ChEBI" id="CHEBI:17996"/>
        <dbReference type="ChEBI" id="CHEBI:24757"/>
        <dbReference type="EC" id="1.11.2.2"/>
    </reaction>
</comment>
<comment type="cofactor">
    <cofactor>
        <name>Ca(2+)</name>
        <dbReference type="ChEBI" id="CHEBI:29108"/>
    </cofactor>
    <text>Binds 1 Ca(2+) ion per monomer.</text>
</comment>
<comment type="cofactor">
    <cofactor>
        <name>heme b</name>
        <dbReference type="ChEBI" id="CHEBI:60344"/>
    </cofactor>
    <text>Binds 1 heme b (iron(II)-protoporphyrin IX) group covalently per monomer.</text>
</comment>
<comment type="subunit">
    <text evidence="2 8 10">Homodimer; disulfide-linked. Each monomer consists of a light and a heavy chain. Found in a complex with CP and LTF; interacts directly with CP, which protects CP antioxidant properties by MPO (PubMed:23843990).</text>
</comment>
<comment type="interaction">
    <interactant intactId="EBI-2556173">
        <id>P05164</id>
    </interactant>
    <interactant intactId="EBI-1049597">
        <id>P27797</id>
        <label>CALR</label>
    </interactant>
    <organismsDiffer>false</organismsDiffer>
    <experiments>3</experiments>
</comment>
<comment type="interaction">
    <interactant intactId="EBI-2556173">
        <id>P05164</id>
    </interactant>
    <interactant intactId="EBI-9038570">
        <id>P27918</id>
        <label>CFP</label>
    </interactant>
    <organismsDiffer>false</organismsDiffer>
    <experiments>4</experiments>
</comment>
<comment type="interaction">
    <interactant intactId="EBI-2556173">
        <id>P05164</id>
    </interactant>
    <interactant intactId="EBI-357085">
        <id>Q9UNE7</id>
        <label>STUB1</label>
    </interactant>
    <organismsDiffer>false</organismsDiffer>
    <experiments>3</experiments>
</comment>
<comment type="subcellular location">
    <subcellularLocation>
        <location>Lysosome</location>
    </subcellularLocation>
</comment>
<comment type="alternative products">
    <event type="alternative splicing"/>
    <isoform>
        <id>P05164-1</id>
        <name>H17</name>
        <name>B</name>
        <sequence type="displayed"/>
    </isoform>
    <isoform>
        <id>P05164-2</id>
        <name>H14</name>
        <sequence type="described" ref="VSP_007206"/>
    </isoform>
    <isoform>
        <id>P05164-3</id>
        <name>H7</name>
        <name>A</name>
        <sequence type="described" ref="VSP_007207"/>
    </isoform>
</comment>
<comment type="disease" evidence="12 14 15 16 17 18">
    <disease id="DI-02016">
        <name>Myeloperoxidase deficiency</name>
        <acronym>MPOD</acronym>
        <description>A disorder characterized by decreased myeloperoxidase activity in neutrophils and monocytes that results in disseminated candidiasis.</description>
        <dbReference type="MIM" id="254600"/>
    </disease>
    <text>The disease is caused by variants affecting the gene represented in this entry.</text>
</comment>
<comment type="similarity">
    <text evidence="1">Belongs to the peroxidase family. XPO subfamily.</text>
</comment>
<comment type="online information" name="MPObase">
    <link uri="https://databases.lovd.nl/shared/genes/MPO"/>
    <text>MPO mutation db</text>
</comment>
<comment type="online information" name="Wikipedia">
    <link uri="https://en.wikipedia.org/wiki/Myeloperoxidase"/>
    <text>Myeloperoxidase entry</text>
</comment>
<keyword id="KW-0002">3D-structure</keyword>
<keyword id="KW-0025">Alternative splicing</keyword>
<keyword id="KW-0106">Calcium</keyword>
<keyword id="KW-0903">Direct protein sequencing</keyword>
<keyword id="KW-0225">Disease variant</keyword>
<keyword id="KW-1015">Disulfide bond</keyword>
<keyword id="KW-0325">Glycoprotein</keyword>
<keyword id="KW-0349">Heme</keyword>
<keyword id="KW-0376">Hydrogen peroxide</keyword>
<keyword id="KW-0408">Iron</keyword>
<keyword id="KW-0458">Lysosome</keyword>
<keyword id="KW-0479">Metal-binding</keyword>
<keyword id="KW-0558">Oxidation</keyword>
<keyword id="KW-0560">Oxidoreductase</keyword>
<keyword id="KW-0575">Peroxidase</keyword>
<keyword id="KW-1267">Proteomics identification</keyword>
<keyword id="KW-1185">Reference proteome</keyword>
<keyword id="KW-0732">Signal</keyword>
<reference key="1">
    <citation type="journal article" date="1987" name="J. Biol. Chem.">
        <title>Molecular cloning and characterization of cDNA for human myeloperoxidase.</title>
        <authorList>
            <person name="Morishita K."/>
            <person name="Kubota N."/>
            <person name="Asano S."/>
            <person name="Kaziro Y."/>
            <person name="Nagata S."/>
        </authorList>
    </citation>
    <scope>NUCLEOTIDE SEQUENCE [MRNA] (ISOFORM H17)</scope>
</reference>
<reference key="2">
    <citation type="journal article" date="1987" name="J. Biol. Chem.">
        <title>Chromosomal gene structure of human myeloperoxidase and regulation of its expression by granulocyte colony-stimulating factor.</title>
        <authorList>
            <person name="Morishita K."/>
            <person name="Tsuchiya M."/>
            <person name="Asano S."/>
            <person name="Kaziro Y."/>
            <person name="Nagata S."/>
        </authorList>
    </citation>
    <scope>NUCLEOTIDE SEQUENCE [GENOMIC DNA]</scope>
</reference>
<reference key="3">
    <citation type="journal article" date="1987" name="J. Clin. Invest.">
        <title>Isolation of a complementary DNA clone for thyroid microsomal antigen. Homology with the gene for thyroid peroxidase.</title>
        <authorList>
            <person name="Seto P."/>
            <person name="Hirayu H."/>
            <person name="Magnusson R.P."/>
            <person name="Gestautas J."/>
            <person name="Portmann L."/>
            <person name="Degroot L.J."/>
            <person name="Rapoport B."/>
        </authorList>
    </citation>
    <scope>NUCLEOTIDE SEQUENCE [MRNA] (ISOFORM H17)</scope>
</reference>
<reference key="4">
    <citation type="journal article" date="1987" name="Nucleic Acids Res.">
        <title>Characterization of cDNA clones for human myeloperoxidase: predicted amino acid sequence and evidence for multiple mRNA species.</title>
        <authorList>
            <person name="Johnson K.R."/>
            <person name="Nauseef W.M."/>
            <person name="Care A."/>
            <person name="Wheelock M.J."/>
            <person name="Shane S."/>
            <person name="Hudson S."/>
            <person name="Koeffler H.P."/>
            <person name="Selsted M."/>
            <person name="Miller C."/>
            <person name="Rovera G."/>
        </authorList>
    </citation>
    <scope>NUCLEOTIDE SEQUENCE [MRNA] (ISOFORM H17)</scope>
</reference>
<reference key="5">
    <citation type="journal article" date="1988" name="Biochemistry">
        <title>Multiple species of myeloperoxidase messenger RNAs produced by alternative splicing and differential polyadenylation.</title>
        <authorList>
            <person name="Hashinaka K."/>
            <person name="Nishio C."/>
            <person name="Hur S.-J."/>
            <person name="Sakiyama F."/>
            <person name="Tsunasawa S."/>
            <person name="Yamada M."/>
        </authorList>
    </citation>
    <scope>NUCLEOTIDE SEQUENCE [GENOMIC DNA / MRNA] (ISOFORMS H7; H14 AND H17)</scope>
    <scope>PROTEIN SEQUENCE OF 165-183; 216-222; 295-304; 311-331; 464-479; 662-676 AND 766-776</scope>
    <source>
        <tissue>Leukemia</tissue>
    </source>
</reference>
<reference key="6">
    <citation type="journal article" date="1988" name="Biochemistry">
        <authorList>
            <person name="Hashinaka K."/>
            <person name="Nishio C."/>
            <person name="Hur S.-J."/>
            <person name="Sakiyama F."/>
            <person name="Tsunasawa S."/>
            <person name="Yamada M."/>
        </authorList>
    </citation>
    <scope>ERRATUM OF PUBMED:2903767</scope>
</reference>
<reference key="7">
    <citation type="journal article" date="1989" name="Nucleic Acids Res.">
        <title>Complete nucleotide sequence of the human myeloperoxidase gene.</title>
        <authorList>
            <person name="Johnson K.R."/>
            <person name="Gemperlein I."/>
            <person name="Hudson S."/>
            <person name="Shane S."/>
            <person name="Rovera G."/>
        </authorList>
    </citation>
    <scope>NUCLEOTIDE SEQUENCE [GENOMIC DNA]</scope>
</reference>
<reference key="8">
    <citation type="journal article" date="1993" name="Leukemia">
        <title>Cloning and characterization of four types of cDNA encoding myeloperoxidase from human monocytic leukemia cell line, SKM-1.</title>
        <authorList>
            <person name="Hosokawa Y."/>
            <person name="Kawaguchi R."/>
            <person name="Hikiji K."/>
            <person name="Yamada M."/>
            <person name="Suzuki K."/>
            <person name="Nakagawa T."/>
            <person name="Yoshihara T."/>
            <person name="Yamaguchi K."/>
        </authorList>
    </citation>
    <scope>NUCLEOTIDE SEQUENCE [MRNA] (ISOFORM H17)</scope>
</reference>
<reference key="9">
    <citation type="submission" date="2005-06" db="EMBL/GenBank/DDBJ databases">
        <authorList>
            <consortium name="NIEHS SNPs program"/>
        </authorList>
    </citation>
    <scope>NUCLEOTIDE SEQUENCE [GENOMIC DNA]</scope>
    <scope>VARIANTS PHE-53; CYS-604; GLN-683 AND VAL-717</scope>
</reference>
<reference key="10">
    <citation type="submission" date="2005-09" db="EMBL/GenBank/DDBJ databases">
        <authorList>
            <person name="Mural R.J."/>
            <person name="Istrail S."/>
            <person name="Sutton G.G."/>
            <person name="Florea L."/>
            <person name="Halpern A.L."/>
            <person name="Mobarry C.M."/>
            <person name="Lippert R."/>
            <person name="Walenz B."/>
            <person name="Shatkay H."/>
            <person name="Dew I."/>
            <person name="Miller J.R."/>
            <person name="Flanigan M.J."/>
            <person name="Edwards N.J."/>
            <person name="Bolanos R."/>
            <person name="Fasulo D."/>
            <person name="Halldorsson B.V."/>
            <person name="Hannenhalli S."/>
            <person name="Turner R."/>
            <person name="Yooseph S."/>
            <person name="Lu F."/>
            <person name="Nusskern D.R."/>
            <person name="Shue B.C."/>
            <person name="Zheng X.H."/>
            <person name="Zhong F."/>
            <person name="Delcher A.L."/>
            <person name="Huson D.H."/>
            <person name="Kravitz S.A."/>
            <person name="Mouchard L."/>
            <person name="Reinert K."/>
            <person name="Remington K.A."/>
            <person name="Clark A.G."/>
            <person name="Waterman M.S."/>
            <person name="Eichler E.E."/>
            <person name="Adams M.D."/>
            <person name="Hunkapiller M.W."/>
            <person name="Myers E.W."/>
            <person name="Venter J.C."/>
        </authorList>
    </citation>
    <scope>NUCLEOTIDE SEQUENCE [LARGE SCALE GENOMIC DNA]</scope>
</reference>
<reference key="11">
    <citation type="journal article" date="2004" name="Genome Res.">
        <title>The status, quality, and expansion of the NIH full-length cDNA project: the Mammalian Gene Collection (MGC).</title>
        <authorList>
            <consortium name="The MGC Project Team"/>
        </authorList>
    </citation>
    <scope>NUCLEOTIDE SEQUENCE [LARGE SCALE MRNA] (ISOFORM H17)</scope>
</reference>
<reference key="12">
    <citation type="journal article" date="1990" name="Biochem. Biophys. Res. Commun.">
        <title>Isolation and characterization of extracellular myeloperoxidase precursor in HL-60 cell cultures.</title>
        <authorList>
            <person name="Yamada M."/>
            <person name="Hur S.-J."/>
            <person name="Toda H."/>
        </authorList>
    </citation>
    <scope>PROTEIN SEQUENCE OF 49-66</scope>
</reference>
<reference key="13">
    <citation type="journal article" date="2010" name="J. Biol. Chem.">
        <title>Glycosylation pattern of mature dimeric leukocyte and recombinant monomeric myeloperoxidase: glycosylation is required for optimal enzymatic activity.</title>
        <authorList>
            <person name="Van Antwerpen P."/>
            <person name="Slomianny M.C."/>
            <person name="Boudjeltia K.Z."/>
            <person name="Delporte C."/>
            <person name="Faid V."/>
            <person name="Calay D."/>
            <person name="Rousseau A."/>
            <person name="Moguilevsky N."/>
            <person name="Raes M."/>
            <person name="Vanhamme L."/>
            <person name="Furtmueller P.G."/>
            <person name="Obinger C."/>
            <person name="Vanhaeverbeek M."/>
            <person name="Neve J."/>
            <person name="Michalski J.C."/>
        </authorList>
    </citation>
    <scope>PROTEIN SEQUENCE OF 49-53</scope>
    <scope>SUBUNIT</scope>
    <scope>GLYCOSYLATION AT ASN-323; ASN-355; ASN-391; ASN-483 AND ASN-729</scope>
    <scope>IDENTIFICATION BY MASS SPECTROMETRY</scope>
</reference>
<reference key="14">
    <citation type="journal article" date="1992" name="J. Biol. Chem.">
        <title>Unique autolytic cleavage of human myeloperoxidase. Implications for the involvement of active site MET409.</title>
        <authorList>
            <person name="Taylor K.L."/>
            <person name="Pohl J."/>
            <person name="Kinkade J.M. Jr."/>
        </authorList>
    </citation>
    <scope>PROTEIN SEQUENCE OF 279-424</scope>
    <source>
        <tissue>Leukocyte</tissue>
    </source>
</reference>
<reference key="15">
    <citation type="journal article" date="1993" name="J. Biol. Chem.">
        <title>Identification of transcriptional cis-elements in introns 7 and 9 of the myeloperoxidase gene.</title>
        <authorList>
            <person name="Yamada M."/>
            <person name="Yoshida M."/>
            <person name="Hashinaka K."/>
        </authorList>
    </citation>
    <scope>NUCLEOTIDE SEQUENCE [GENOMIC DNA] OF 548-629</scope>
</reference>
<reference key="16">
    <citation type="journal article" date="1987" name="Arch. Biochem. Biophys.">
        <title>Isolation and characterization of a cDNA coding for human myeloperoxidase.</title>
        <authorList>
            <person name="Yamada M."/>
            <person name="Hur S.-J."/>
            <person name="Hashinaka K."/>
            <person name="Tsuneoka K."/>
            <person name="Saeki T."/>
            <person name="Nishio C."/>
            <person name="Sakiyama F."/>
            <person name="Tsunasawa S."/>
        </authorList>
    </citation>
    <scope>NUCLEOTIDE SEQUENCE [MRNA] OF 588-745</scope>
</reference>
<reference key="17">
    <citation type="journal article" date="1998" name="Biochemistry">
        <title>Reaction of myeloperoxidase compound I with chloride, bromide, iodide, and thiocyanate.</title>
        <authorList>
            <person name="Furtmueller P.G."/>
            <person name="Burner U."/>
            <person name="Obinger C."/>
        </authorList>
    </citation>
    <scope>FUNCTION</scope>
    <scope>CATALYTIC ACTIVITY</scope>
</reference>
<reference key="18">
    <citation type="journal article" date="2005" name="J. Proteome Res.">
        <title>Human plasma N-glycoproteome analysis by immunoaffinity subtraction, hydrazide chemistry, and mass spectrometry.</title>
        <authorList>
            <person name="Liu T."/>
            <person name="Qian W.-J."/>
            <person name="Gritsenko M.A."/>
            <person name="Camp D.G. II"/>
            <person name="Monroe M.E."/>
            <person name="Moore R.J."/>
            <person name="Smith R.D."/>
        </authorList>
    </citation>
    <scope>GLYCOSYLATION [LARGE SCALE ANALYSIS] AT ASN-139 AND ASN-483</scope>
    <source>
        <tissue>Plasma</tissue>
    </source>
</reference>
<reference key="19">
    <citation type="journal article" date="2006" name="J. Proteome Res.">
        <title>Identification of N-linked glycoproteins in human saliva by glycoprotein capture and mass spectrometry.</title>
        <authorList>
            <person name="Ramachandran P."/>
            <person name="Boontheung P."/>
            <person name="Xie Y."/>
            <person name="Sondej M."/>
            <person name="Wong D.T."/>
            <person name="Loo J.A."/>
        </authorList>
    </citation>
    <scope>GLYCOSYLATION [LARGE SCALE ANALYSIS] AT ASN-323 AND ASN-483</scope>
    <source>
        <tissue>Saliva</tissue>
    </source>
</reference>
<reference key="20">
    <citation type="journal article" date="2009" name="J. Proteome Res.">
        <title>Glycoproteomics analysis of human liver tissue by combination of multiple enzyme digestion and hydrazide chemistry.</title>
        <authorList>
            <person name="Chen R."/>
            <person name="Jiang X."/>
            <person name="Sun D."/>
            <person name="Han G."/>
            <person name="Wang F."/>
            <person name="Ye M."/>
            <person name="Wang L."/>
            <person name="Zou H."/>
        </authorList>
    </citation>
    <scope>GLYCOSYLATION [LARGE SCALE ANALYSIS] AT ASN-355 AND ASN-391</scope>
    <source>
        <tissue>Liver</tissue>
    </source>
</reference>
<reference key="21">
    <citation type="journal article" date="2011" name="BMC Syst. Biol.">
        <title>Initial characterization of the human central proteome.</title>
        <authorList>
            <person name="Burkard T.R."/>
            <person name="Planyavsky M."/>
            <person name="Kaupe I."/>
            <person name="Breitwieser F.P."/>
            <person name="Buerckstuemmer T."/>
            <person name="Bennett K.L."/>
            <person name="Superti-Furga G."/>
            <person name="Colinge J."/>
        </authorList>
    </citation>
    <scope>IDENTIFICATION BY MASS SPECTROMETRY [LARGE SCALE ANALYSIS]</scope>
</reference>
<reference key="22">
    <citation type="journal article" date="2015" name="Front. Physiol.">
        <title>A1M/alpha1-microglobulin is proteolytically activated by myeloperoxidase, binds its heme group and inhibits low density lipoprotein oxidation.</title>
        <authorList>
            <person name="Cederlund M."/>
            <person name="Deronic A."/>
            <person name="Pallon J."/>
            <person name="Soerensen O.E."/>
            <person name="Aakerstroem B."/>
        </authorList>
    </citation>
    <scope>FUNCTION</scope>
</reference>
<reference evidence="30" key="23">
    <citation type="journal article" date="1995" name="Arch. Biochem. Biophys.">
        <title>Structure of the green heme in myeloperoxidase.</title>
        <authorList>
            <person name="Fenna R.E."/>
            <person name="Zeng J."/>
            <person name="Davey C."/>
        </authorList>
    </citation>
    <scope>X-RAY CRYSTALLOGRAPHY (2.25 ANGSTROMS) OF 167-744</scope>
    <scope>OXIDATION AT CYS-316</scope>
</reference>
<reference evidence="24 25" key="24">
    <citation type="journal article" date="2000" name="J. Biol. Chem.">
        <title>X-ray crystal structure and characterization of halide-binding sites of human myeloperoxidase at 1.8-A resolution.</title>
        <authorList>
            <person name="Fiedler T.J."/>
            <person name="Davey C.A."/>
            <person name="Fenna R.E."/>
        </authorList>
    </citation>
    <scope>X-RAY CRYSTALLOGRAPHY (1.75 ANGSTROMS) OF 167-744</scope>
    <scope>SUBUNIT</scope>
</reference>
<reference evidence="26 27 28 29" key="25">
    <citation type="journal article" date="2001" name="Biochemistry">
        <title>Human myeloperoxidase: structure of a cyanide complex and its interaction with bromide and thiocyanate substrates at 1.9 A resolution.</title>
        <authorList>
            <person name="Blair-Johnson M."/>
            <person name="Fiedler T."/>
            <person name="Fenna R."/>
        </authorList>
    </citation>
    <scope>X-RAY CRYSTALLOGRAPHY (1.85 ANGSTROMS) OF 167-744</scope>
</reference>
<reference evidence="31" key="26">
    <citation type="journal article" date="2013" name="PLoS ONE">
        <title>Ceruloplasmin: macromolecular assemblies with iron-containing acute phase proteins.</title>
        <authorList>
            <person name="Samygina V.R."/>
            <person name="Sokolov A.V."/>
            <person name="Bourenkov G."/>
            <person name="Petoukhov M.V."/>
            <person name="Pulina M.O."/>
            <person name="Zakharova E.T."/>
            <person name="Vasilyev V.B."/>
            <person name="Bartunik H."/>
            <person name="Svergun D.I."/>
        </authorList>
    </citation>
    <scope>X-RAY CRYSTALLOGRAPHY (4.69 ANGSTROMS) OF 165-278 AND 279-745 IN COMPLEX WITH HEME B AND CP</scope>
    <scope>GLYCOSYLATION AT ASN-355; ASN-391 AND ASN-483</scope>
    <scope>INTERACTION WITH CP</scope>
</reference>
<reference key="27">
    <citation type="journal article" date="1994" name="Blood">
        <title>Myeloperoxidase (MPO) gene mutation in hereditary MPO deficiency.</title>
        <authorList>
            <person name="Kizaki M."/>
            <person name="Miller C.W."/>
            <person name="Selsted M.E."/>
            <person name="Koeffler H.P."/>
        </authorList>
    </citation>
    <scope>VARIANT MPOD TRP-569</scope>
</reference>
<reference key="28">
    <citation type="journal article" date="1994" name="J. Biol. Chem.">
        <title>Hereditary myeloperoxidase deficiency due to a missense mutation of arginine 569 to tryptophan.</title>
        <authorList>
            <person name="Nauseef W.M."/>
            <person name="Brigham S."/>
            <person name="Cogley M."/>
        </authorList>
    </citation>
    <scope>VARIANT MPOD TRP-569</scope>
</reference>
<reference key="29">
    <citation type="journal article" date="1996" name="J. Biol. Chem.">
        <title>Effect of the R569W missense mutation on the biosynthesis of myeloperoxidase.</title>
        <authorList>
            <person name="Nauseef W."/>
            <person name="Cogley M."/>
            <person name="McCormick S."/>
        </authorList>
    </citation>
    <scope>CHARACTERIZATION OF VARIANT MPOD TRP-569</scope>
</reference>
<reference key="30">
    <citation type="journal article" date="1998" name="J. Clin. Invest.">
        <title>A novel form of hereditary myeloperoxidase deficiency linked to endoplasmic reticulum/proteasome degradation.</title>
        <authorList>
            <person name="DeLeo F.R."/>
            <person name="Goedken M."/>
            <person name="McCormick S.J."/>
            <person name="Nauseef W.M."/>
        </authorList>
    </citation>
    <scope>VARIANT MPOD CYS-173</scope>
    <scope>CHARACTERIZATION OF VARIANT MPOD CYS-173</scope>
</reference>
<reference key="31">
    <citation type="journal article" date="1997" name="Blood">
        <title>Biochemical and molecular characterization of hereditary myeloperoxidase deficiency.</title>
        <authorList>
            <person name="Romano M."/>
            <person name="Dri P."/>
            <person name="Dadalt L."/>
            <person name="Patriarca P."/>
            <person name="Baralle F.E."/>
        </authorList>
    </citation>
    <scope>VARIANT MPOD THR-251</scope>
</reference>
<reference key="32">
    <citation type="journal article" date="2006" name="Science">
        <title>The consensus coding sequences of human breast and colorectal cancers.</title>
        <authorList>
            <person name="Sjoeblom T."/>
            <person name="Jones S."/>
            <person name="Wood L.D."/>
            <person name="Parsons D.W."/>
            <person name="Lin J."/>
            <person name="Barber T.D."/>
            <person name="Mandelker D."/>
            <person name="Leary R.J."/>
            <person name="Ptak J."/>
            <person name="Silliman N."/>
            <person name="Szabo S."/>
            <person name="Buckhaults P."/>
            <person name="Farrell C."/>
            <person name="Meeh P."/>
            <person name="Markowitz S.D."/>
            <person name="Willis J."/>
            <person name="Dawson D."/>
            <person name="Willson J.K.V."/>
            <person name="Gazdar A.F."/>
            <person name="Hartigan J."/>
            <person name="Wu L."/>
            <person name="Liu C."/>
            <person name="Parmigiani G."/>
            <person name="Park B.H."/>
            <person name="Bachman K.E."/>
            <person name="Papadopoulos N."/>
            <person name="Vogelstein B."/>
            <person name="Kinzler K.W."/>
            <person name="Velculescu V.E."/>
        </authorList>
    </citation>
    <scope>VARIANT [LARGE SCALE ANALYSIS] GLN-447</scope>
</reference>
<reference key="33">
    <citation type="journal article" date="2023" name="Hum. Genet.">
        <title>De novo MCM6 variants in neurodevelopmental disorders: a recognizable phenotype related to zinc binding residues.</title>
        <authorList>
            <person name="Smits D.J."/>
            <person name="Schot R."/>
            <person name="Popescu C.A."/>
            <person name="Dias K.R."/>
            <person name="Ades L."/>
            <person name="Briere L.C."/>
            <person name="Sweetser D.A."/>
            <person name="Kushima I."/>
            <person name="Aleksic B."/>
            <person name="Khan S."/>
            <person name="Karageorgou V."/>
            <person name="Ordonez N."/>
            <person name="Sleutels F.J.G.T."/>
            <person name="van der Kaay D.C.M."/>
            <person name="Van Mol C."/>
            <person name="Van Esch H."/>
            <person name="Bertoli-Avella A.M."/>
            <person name="Roscioli T."/>
            <person name="Mancini G.M.S."/>
        </authorList>
    </citation>
    <scope>VARIANT MPOD TRP-569</scope>
</reference>
<protein>
    <recommendedName>
        <fullName>Myeloperoxidase</fullName>
        <shortName>MPO</shortName>
        <ecNumber evidence="19">1.11.2.2</ecNumber>
    </recommendedName>
    <component>
        <recommendedName>
            <fullName>Myeloperoxidase</fullName>
        </recommendedName>
    </component>
    <component>
        <recommendedName>
            <fullName>89 kDa myeloperoxidase</fullName>
        </recommendedName>
    </component>
    <component>
        <recommendedName>
            <fullName>84 kDa myeloperoxidase</fullName>
        </recommendedName>
    </component>
    <component>
        <recommendedName>
            <fullName>Myeloperoxidase light chain</fullName>
        </recommendedName>
    </component>
    <component>
        <recommendedName>
            <fullName>Myeloperoxidase heavy chain</fullName>
        </recommendedName>
    </component>
</protein>
<sequence>MGVPFFSSLRCMVDLGPCWAGGLTAEMKLLLALAGLLAILATPQPSEGAAPAVLGEVDTSLVLSSMEEAKQLVDKAYKERRESIKQRLRSGSASPMELLSYFKQPVAATRTAVRAADYLHVALDLLERKLRSLWRRPFNVTDVLTPAQLNVLSKSSGCAYQDVGVTCPEQDKYRTITGMCNNRRSPTLGASNRAFVRWLPAEYEDGFSLPYGWTPGVKRNGFPVALARAVSNEIVRFPTDQLTPDQERSLMFMQWGQLLDHDLDFTPEPAARASFVTGVNCETSCVQQPPCFPLKIPPNDPRIKNQADCIPFFRSCPACPGSNITIRNQINALTSFVDASMVYGSEEPLARNLRNMSNQLGLLAVNQRFQDNGRALLPFDNLHDDPCLLTNRSARIPCFLAGDTRSSEMPELTSMHTLLLREHNRLATELKSLNPRWDGERLYQEARKIVGAMVQIITYRDYLPLVLGPTAMRKYLPTYRSYNDSVDPRIANVFTNAFRYGHTLIQPFMFRLDNRYQPMEPNPRVPLSRVFFASWRVVLEGGIDPILRGLMATPAKLNRQNQIAVDEIRERLFEQVMRIGLDLPALNMQRSRDHGLPGYNAWRRFCGLPQPETVGQLGTVLRNLKLARKLMEQYGTPNNIDIWMGGVSEPLKRKGRVGPLLACIIGTQFRKLRDGDRFWWENEGVFSMQQRQALAQISLPRIICDNTGITTVSKNNIFMSNSYPRDFVNCSTLPALNLASWREAS</sequence>
<dbReference type="EC" id="1.11.2.2" evidence="19"/>
<dbReference type="EMBL" id="J02694">
    <property type="protein sequence ID" value="AAA59896.1"/>
    <property type="molecule type" value="mRNA"/>
</dbReference>
<dbReference type="EMBL" id="M17176">
    <property type="protein sequence ID" value="AAA60346.1"/>
    <property type="molecule type" value="Genomic_DNA"/>
</dbReference>
<dbReference type="EMBL" id="M17170">
    <property type="protein sequence ID" value="AAA60346.1"/>
    <property type="status" value="JOINED"/>
    <property type="molecule type" value="Genomic_DNA"/>
</dbReference>
<dbReference type="EMBL" id="M17171">
    <property type="protein sequence ID" value="AAA60346.1"/>
    <property type="status" value="JOINED"/>
    <property type="molecule type" value="Genomic_DNA"/>
</dbReference>
<dbReference type="EMBL" id="M17172">
    <property type="protein sequence ID" value="AAA60346.1"/>
    <property type="status" value="JOINED"/>
    <property type="molecule type" value="Genomic_DNA"/>
</dbReference>
<dbReference type="EMBL" id="M17173">
    <property type="protein sequence ID" value="AAA60346.1"/>
    <property type="status" value="JOINED"/>
    <property type="molecule type" value="Genomic_DNA"/>
</dbReference>
<dbReference type="EMBL" id="M17174">
    <property type="protein sequence ID" value="AAA60346.1"/>
    <property type="status" value="JOINED"/>
    <property type="molecule type" value="Genomic_DNA"/>
</dbReference>
<dbReference type="EMBL" id="M17175">
    <property type="protein sequence ID" value="AAA60346.1"/>
    <property type="status" value="JOINED"/>
    <property type="molecule type" value="Genomic_DNA"/>
</dbReference>
<dbReference type="EMBL" id="X04876">
    <property type="protein sequence ID" value="CAA28565.1"/>
    <property type="molecule type" value="mRNA"/>
</dbReference>
<dbReference type="EMBL" id="M19507">
    <property type="protein sequence ID" value="AAA59863.1"/>
    <property type="molecule type" value="mRNA"/>
</dbReference>
<dbReference type="EMBL" id="M19508">
    <property type="protein sequence ID" value="AAA59864.1"/>
    <property type="molecule type" value="Genomic_DNA"/>
</dbReference>
<dbReference type="EMBL" id="M19508">
    <property type="protein sequence ID" value="AAA59865.1"/>
    <property type="molecule type" value="Genomic_DNA"/>
</dbReference>
<dbReference type="EMBL" id="X15377">
    <property type="protein sequence ID" value="CAA33438.1"/>
    <property type="molecule type" value="Genomic_DNA"/>
</dbReference>
<dbReference type="EMBL" id="S56200">
    <property type="protein sequence ID" value="AAB25582.1"/>
    <property type="molecule type" value="mRNA"/>
</dbReference>
<dbReference type="EMBL" id="DQ088846">
    <property type="protein sequence ID" value="AAY68218.1"/>
    <property type="molecule type" value="Genomic_DNA"/>
</dbReference>
<dbReference type="EMBL" id="CH471109">
    <property type="protein sequence ID" value="EAW94470.1"/>
    <property type="molecule type" value="Genomic_DNA"/>
</dbReference>
<dbReference type="EMBL" id="BC130476">
    <property type="protein sequence ID" value="AAI30477.1"/>
    <property type="molecule type" value="mRNA"/>
</dbReference>
<dbReference type="EMBL" id="D14466">
    <property type="protein sequence ID" value="BAA03362.1"/>
    <property type="molecule type" value="Genomic_DNA"/>
</dbReference>
<dbReference type="CCDS" id="CCDS11604.1">
    <molecule id="P05164-1"/>
</dbReference>
<dbReference type="PIR" id="A29467">
    <property type="entry name" value="OPHUM"/>
</dbReference>
<dbReference type="PIR" id="B28894">
    <property type="entry name" value="B28894"/>
</dbReference>
<dbReference type="PIR" id="D28894">
    <property type="entry name" value="D28894"/>
</dbReference>
<dbReference type="RefSeq" id="NP_000241.1">
    <molecule id="P05164-1"/>
    <property type="nucleotide sequence ID" value="NM_000250.2"/>
</dbReference>
<dbReference type="PDB" id="1CXP">
    <property type="method" value="X-ray"/>
    <property type="resolution" value="1.80 A"/>
    <property type="chains" value="A/B=167-270, C/D=279-744"/>
</dbReference>
<dbReference type="PDB" id="1D2V">
    <property type="method" value="X-ray"/>
    <property type="resolution" value="1.75 A"/>
    <property type="chains" value="A/B=167-270, C/D=279-744"/>
</dbReference>
<dbReference type="PDB" id="1D5L">
    <property type="method" value="X-ray"/>
    <property type="resolution" value="1.90 A"/>
    <property type="chains" value="A/B=167-270, C/D=279-744"/>
</dbReference>
<dbReference type="PDB" id="1D7W">
    <property type="method" value="X-ray"/>
    <property type="resolution" value="1.90 A"/>
    <property type="chains" value="A/B=167-270, C/D=279-744"/>
</dbReference>
<dbReference type="PDB" id="1DNU">
    <property type="method" value="X-ray"/>
    <property type="resolution" value="1.85 A"/>
    <property type="chains" value="A/B=167-270, C/D=279-744"/>
</dbReference>
<dbReference type="PDB" id="1DNW">
    <property type="method" value="X-ray"/>
    <property type="resolution" value="1.90 A"/>
    <property type="chains" value="A/B=167-270, C/D=279-744"/>
</dbReference>
<dbReference type="PDB" id="1MHL">
    <property type="method" value="X-ray"/>
    <property type="resolution" value="2.25 A"/>
    <property type="chains" value="A/B=165-272, C/D=279-744"/>
</dbReference>
<dbReference type="PDB" id="1MYP">
    <property type="method" value="X-ray"/>
    <property type="resolution" value="3.00 A"/>
    <property type="chains" value="A/B=165-272, C/D=279-744"/>
</dbReference>
<dbReference type="PDB" id="3F9P">
    <property type="method" value="X-ray"/>
    <property type="resolution" value="2.93 A"/>
    <property type="chains" value="A/B=165-278, C/D=279-745"/>
</dbReference>
<dbReference type="PDB" id="3ZS0">
    <property type="method" value="X-ray"/>
    <property type="resolution" value="2.30 A"/>
    <property type="chains" value="A/B=165-272, C/D=279-745"/>
</dbReference>
<dbReference type="PDB" id="3ZS1">
    <property type="method" value="X-ray"/>
    <property type="resolution" value="2.60 A"/>
    <property type="chains" value="A/B=165-278, C/D=279-745"/>
</dbReference>
<dbReference type="PDB" id="4C1M">
    <property type="method" value="X-ray"/>
    <property type="resolution" value="2.00 A"/>
    <property type="chains" value="A/B=165-272, C/D=279-745"/>
</dbReference>
<dbReference type="PDB" id="4DL1">
    <property type="method" value="X-ray"/>
    <property type="resolution" value="2.00 A"/>
    <property type="chains" value="A/B/E/F/I/J/M/N=167-270, C/D/G/H/K/L/O/P=279-744"/>
</dbReference>
<dbReference type="PDB" id="4EJX">
    <property type="method" value="X-ray"/>
    <property type="resolution" value="4.69 A"/>
    <property type="chains" value="B=165-278, D=279-745"/>
</dbReference>
<dbReference type="PDB" id="5FIW">
    <property type="method" value="X-ray"/>
    <property type="resolution" value="1.70 A"/>
    <property type="chains" value="A/B=167-271, C/D=279-744"/>
</dbReference>
<dbReference type="PDB" id="5MFA">
    <property type="method" value="X-ray"/>
    <property type="resolution" value="1.20 A"/>
    <property type="chains" value="A=49-745"/>
</dbReference>
<dbReference type="PDB" id="5UZU">
    <property type="method" value="X-ray"/>
    <property type="resolution" value="2.40 A"/>
    <property type="chains" value="A=167-744"/>
</dbReference>
<dbReference type="PDB" id="6AZP">
    <property type="method" value="X-ray"/>
    <property type="resolution" value="2.29 A"/>
    <property type="chains" value="A=167-743"/>
</dbReference>
<dbReference type="PDB" id="6BMT">
    <property type="method" value="X-ray"/>
    <property type="resolution" value="2.40 A"/>
    <property type="chains" value="A=1-745"/>
</dbReference>
<dbReference type="PDB" id="7OIH">
    <property type="method" value="X-ray"/>
    <property type="resolution" value="2.60 A"/>
    <property type="chains" value="A/B/C/D/E/F/G/H=166-744"/>
</dbReference>
<dbReference type="PDBsum" id="1CXP"/>
<dbReference type="PDBsum" id="1D2V"/>
<dbReference type="PDBsum" id="1D5L"/>
<dbReference type="PDBsum" id="1D7W"/>
<dbReference type="PDBsum" id="1DNU"/>
<dbReference type="PDBsum" id="1DNW"/>
<dbReference type="PDBsum" id="1MHL"/>
<dbReference type="PDBsum" id="1MYP"/>
<dbReference type="PDBsum" id="3F9P"/>
<dbReference type="PDBsum" id="3ZS0"/>
<dbReference type="PDBsum" id="3ZS1"/>
<dbReference type="PDBsum" id="4C1M"/>
<dbReference type="PDBsum" id="4DL1"/>
<dbReference type="PDBsum" id="4EJX"/>
<dbReference type="PDBsum" id="5FIW"/>
<dbReference type="PDBsum" id="5MFA"/>
<dbReference type="PDBsum" id="5UZU"/>
<dbReference type="PDBsum" id="6AZP"/>
<dbReference type="PDBsum" id="6BMT"/>
<dbReference type="PDBsum" id="7OIH"/>
<dbReference type="SASBDB" id="P05164"/>
<dbReference type="SMR" id="P05164"/>
<dbReference type="BioGRID" id="110493">
    <property type="interactions" value="75"/>
</dbReference>
<dbReference type="CORUM" id="P05164"/>
<dbReference type="FunCoup" id="P05164">
    <property type="interactions" value="686"/>
</dbReference>
<dbReference type="IntAct" id="P05164">
    <property type="interactions" value="47"/>
</dbReference>
<dbReference type="MINT" id="P05164"/>
<dbReference type="STRING" id="9606.ENSP00000225275"/>
<dbReference type="BindingDB" id="P05164"/>
<dbReference type="ChEMBL" id="CHEMBL2439"/>
<dbReference type="DrugBank" id="DB06111">
    <property type="generic name" value="AB192"/>
</dbReference>
<dbReference type="DrugBank" id="DB00233">
    <property type="generic name" value="Aminosalicylic acid"/>
</dbReference>
<dbReference type="DrugBank" id="DB00006">
    <property type="generic name" value="Bivalirudin"/>
</dbReference>
<dbReference type="DrugBank" id="DB02300">
    <property type="generic name" value="Calcipotriol"/>
</dbReference>
<dbReference type="DrugBank" id="DB06774">
    <property type="generic name" value="Capsaicin"/>
</dbReference>
<dbReference type="DrugBank" id="DB00958">
    <property type="generic name" value="Carboplatin"/>
</dbReference>
<dbReference type="DrugBank" id="DB06468">
    <property type="generic name" value="Cariporide"/>
</dbReference>
<dbReference type="DrugBank" id="DB00833">
    <property type="generic name" value="Cefaclor"/>
</dbReference>
<dbReference type="DrugBank" id="DB00535">
    <property type="generic name" value="Cefdinir"/>
</dbReference>
<dbReference type="DrugBank" id="DB00515">
    <property type="generic name" value="Cisplatin"/>
</dbReference>
<dbReference type="DrugBank" id="DB00847">
    <property type="generic name" value="Cysteamine"/>
</dbReference>
<dbReference type="DrugBank" id="DB00250">
    <property type="generic name" value="Dapsone"/>
</dbReference>
<dbReference type="DrugBank" id="DB05161">
    <property type="generic name" value="Elafin"/>
</dbReference>
<dbReference type="DrugBank" id="DB01225">
    <property type="generic name" value="Enoxaparin"/>
</dbReference>
<dbReference type="DrugBank" id="DB00583">
    <property type="generic name" value="Levocarnitine"/>
</dbReference>
<dbReference type="DrugBank" id="DB01065">
    <property type="generic name" value="Melatonin"/>
</dbReference>
<dbReference type="DrugBank" id="DB18963">
    <property type="generic name" value="Mitiperstat"/>
</dbReference>
<dbReference type="DrugBank" id="DB00461">
    <property type="generic name" value="Nabumetone"/>
</dbReference>
<dbReference type="DrugBank" id="DB04821">
    <property type="generic name" value="Nomifensine"/>
</dbReference>
<dbReference type="DrugBank" id="DB00104">
    <property type="generic name" value="Octreotide"/>
</dbReference>
<dbReference type="DrugBank" id="DB00526">
    <property type="generic name" value="Oxaliplatin"/>
</dbReference>
<dbReference type="DrugBank" id="DB00550">
    <property type="generic name" value="Propylthiouracil"/>
</dbReference>
<dbReference type="DrugBank" id="DB00208">
    <property type="generic name" value="Ticlopidine"/>
</dbReference>
<dbReference type="DrugBank" id="DB06823">
    <property type="generic name" value="Tiopronin"/>
</dbReference>
<dbReference type="DrugBank" id="DB00500">
    <property type="generic name" value="Tolmetin"/>
</dbReference>
<dbReference type="DrugBank" id="DB04827">
    <property type="generic name" value="Urethane"/>
</dbReference>
<dbReference type="DrugBank" id="DB12440">
    <property type="generic name" value="Verdiperstat"/>
</dbReference>
<dbReference type="DrugCentral" id="P05164"/>
<dbReference type="GuidetoPHARMACOLOGY" id="2789"/>
<dbReference type="PeroxiBase" id="3315">
    <property type="entry name" value="HsMPO"/>
</dbReference>
<dbReference type="GlyConnect" id="428">
    <property type="glycosylation" value="30 N-Linked glycans (5 sites), 2 O-Linked glycans (2 sites)"/>
</dbReference>
<dbReference type="GlyCosmos" id="P05164">
    <property type="glycosylation" value="8 sites, 38 glycans"/>
</dbReference>
<dbReference type="GlyGen" id="P05164">
    <property type="glycosylation" value="13 sites, 68 N-linked glycans (6 sites), 2 O-linked glycans (2 sites)"/>
</dbReference>
<dbReference type="iPTMnet" id="P05164"/>
<dbReference type="PhosphoSitePlus" id="P05164"/>
<dbReference type="SwissPalm" id="P05164"/>
<dbReference type="BioMuta" id="MPO"/>
<dbReference type="DMDM" id="129825"/>
<dbReference type="jPOST" id="P05164"/>
<dbReference type="MassIVE" id="P05164"/>
<dbReference type="PaxDb" id="9606-ENSP00000225275"/>
<dbReference type="PeptideAtlas" id="P05164"/>
<dbReference type="PRIDE" id="P05164"/>
<dbReference type="ProteomicsDB" id="51811">
    <molecule id="P05164-1"/>
</dbReference>
<dbReference type="ProteomicsDB" id="51812">
    <molecule id="P05164-2"/>
</dbReference>
<dbReference type="ProteomicsDB" id="51813">
    <molecule id="P05164-3"/>
</dbReference>
<dbReference type="Pumba" id="P05164"/>
<dbReference type="ABCD" id="P05164">
    <property type="antibodies" value="1 sequenced antibody"/>
</dbReference>
<dbReference type="Antibodypedia" id="3513">
    <property type="antibodies" value="1867 antibodies from 56 providers"/>
</dbReference>
<dbReference type="CPTC" id="P05164">
    <property type="antibodies" value="3 antibodies"/>
</dbReference>
<dbReference type="DNASU" id="4353"/>
<dbReference type="Ensembl" id="ENST00000225275.4">
    <molecule id="P05164-1"/>
    <property type="protein sequence ID" value="ENSP00000225275.3"/>
    <property type="gene ID" value="ENSG00000005381.9"/>
</dbReference>
<dbReference type="GeneID" id="4353"/>
<dbReference type="KEGG" id="hsa:4353"/>
<dbReference type="MANE-Select" id="ENST00000225275.4">
    <property type="protein sequence ID" value="ENSP00000225275.3"/>
    <property type="RefSeq nucleotide sequence ID" value="NM_000250.2"/>
    <property type="RefSeq protein sequence ID" value="NP_000241.1"/>
</dbReference>
<dbReference type="UCSC" id="uc002ivu.1">
    <molecule id="P05164-1"/>
    <property type="organism name" value="human"/>
</dbReference>
<dbReference type="AGR" id="HGNC:7218"/>
<dbReference type="CTD" id="4353"/>
<dbReference type="DisGeNET" id="4353"/>
<dbReference type="GeneCards" id="MPO"/>
<dbReference type="HGNC" id="HGNC:7218">
    <property type="gene designation" value="MPO"/>
</dbReference>
<dbReference type="HPA" id="ENSG00000005381">
    <property type="expression patterns" value="Tissue enriched (bone)"/>
</dbReference>
<dbReference type="MalaCards" id="MPO"/>
<dbReference type="MIM" id="254600">
    <property type="type" value="phenotype"/>
</dbReference>
<dbReference type="MIM" id="606989">
    <property type="type" value="gene"/>
</dbReference>
<dbReference type="neXtProt" id="NX_P05164"/>
<dbReference type="OpenTargets" id="ENSG00000005381"/>
<dbReference type="Orphanet" id="2587">
    <property type="disease" value="Myeloperoxidase deficiency"/>
</dbReference>
<dbReference type="PharmGKB" id="PA243"/>
<dbReference type="VEuPathDB" id="HostDB:ENSG00000005381"/>
<dbReference type="eggNOG" id="KOG2408">
    <property type="taxonomic scope" value="Eukaryota"/>
</dbReference>
<dbReference type="GeneTree" id="ENSGT00940000161343"/>
<dbReference type="HOGENOM" id="CLU_006087_1_1_1"/>
<dbReference type="InParanoid" id="P05164"/>
<dbReference type="OMA" id="RYQPMGP"/>
<dbReference type="OrthoDB" id="823504at2759"/>
<dbReference type="PAN-GO" id="P05164">
    <property type="GO annotations" value="3 GO annotations based on evolutionary models"/>
</dbReference>
<dbReference type="PhylomeDB" id="P05164"/>
<dbReference type="TreeFam" id="TF314316"/>
<dbReference type="BioCyc" id="MetaCyc:HS00140-MONOMER"/>
<dbReference type="BRENDA" id="1.11.2.2">
    <property type="organism ID" value="2681"/>
</dbReference>
<dbReference type="PathwayCommons" id="P05164"/>
<dbReference type="Reactome" id="R-HSA-6798695">
    <property type="pathway name" value="Neutrophil degranulation"/>
</dbReference>
<dbReference type="Reactome" id="R-HSA-8941413">
    <property type="pathway name" value="Events associated with phagocytolytic activity of PMN cells"/>
</dbReference>
<dbReference type="SignaLink" id="P05164"/>
<dbReference type="SIGNOR" id="P05164"/>
<dbReference type="BioGRID-ORCS" id="4353">
    <property type="hits" value="15 hits in 1153 CRISPR screens"/>
</dbReference>
<dbReference type="CD-CODE" id="FB4E32DD">
    <property type="entry name" value="Presynaptic clusters and postsynaptic densities"/>
</dbReference>
<dbReference type="ChiTaRS" id="MPO">
    <property type="organism name" value="human"/>
</dbReference>
<dbReference type="EvolutionaryTrace" id="P05164"/>
<dbReference type="GeneWiki" id="Myeloperoxidase"/>
<dbReference type="GenomeRNAi" id="4353"/>
<dbReference type="Pharos" id="P05164">
    <property type="development level" value="Tchem"/>
</dbReference>
<dbReference type="PRO" id="PR:P05164"/>
<dbReference type="Proteomes" id="UP000005640">
    <property type="component" value="Chromosome 17"/>
</dbReference>
<dbReference type="RNAct" id="P05164">
    <property type="molecule type" value="protein"/>
</dbReference>
<dbReference type="Bgee" id="ENSG00000005381">
    <property type="expression patterns" value="Expressed in trabecular bone tissue and 101 other cell types or tissues"/>
</dbReference>
<dbReference type="ExpressionAtlas" id="P05164">
    <property type="expression patterns" value="baseline and differential"/>
</dbReference>
<dbReference type="GO" id="GO:0042582">
    <property type="term" value="C:azurophil granule"/>
    <property type="evidence" value="ECO:0000314"/>
    <property type="project" value="UniProtKB"/>
</dbReference>
<dbReference type="GO" id="GO:0035578">
    <property type="term" value="C:azurophil granule lumen"/>
    <property type="evidence" value="ECO:0000304"/>
    <property type="project" value="Reactome"/>
</dbReference>
<dbReference type="GO" id="GO:0070062">
    <property type="term" value="C:extracellular exosome"/>
    <property type="evidence" value="ECO:0007005"/>
    <property type="project" value="UniProtKB"/>
</dbReference>
<dbReference type="GO" id="GO:0005576">
    <property type="term" value="C:extracellular region"/>
    <property type="evidence" value="ECO:0000304"/>
    <property type="project" value="Reactome"/>
</dbReference>
<dbReference type="GO" id="GO:0005615">
    <property type="term" value="C:extracellular space"/>
    <property type="evidence" value="ECO:0000314"/>
    <property type="project" value="UniProtKB"/>
</dbReference>
<dbReference type="GO" id="GO:0043231">
    <property type="term" value="C:intracellular membrane-bounded organelle"/>
    <property type="evidence" value="ECO:0000314"/>
    <property type="project" value="HPA"/>
</dbReference>
<dbReference type="GO" id="GO:0005764">
    <property type="term" value="C:lysosome"/>
    <property type="evidence" value="ECO:0000304"/>
    <property type="project" value="ProtInc"/>
</dbReference>
<dbReference type="GO" id="GO:0005654">
    <property type="term" value="C:nucleoplasm"/>
    <property type="evidence" value="ECO:0000314"/>
    <property type="project" value="HPA"/>
</dbReference>
<dbReference type="GO" id="GO:0005634">
    <property type="term" value="C:nucleus"/>
    <property type="evidence" value="ECO:0007005"/>
    <property type="project" value="UniProtKB"/>
</dbReference>
<dbReference type="GO" id="GO:0097013">
    <property type="term" value="C:phagocytic vesicle lumen"/>
    <property type="evidence" value="ECO:0000304"/>
    <property type="project" value="Reactome"/>
</dbReference>
<dbReference type="GO" id="GO:0030141">
    <property type="term" value="C:secretory granule"/>
    <property type="evidence" value="ECO:0000314"/>
    <property type="project" value="MGI"/>
</dbReference>
<dbReference type="GO" id="GO:0003682">
    <property type="term" value="F:chromatin binding"/>
    <property type="evidence" value="ECO:0000304"/>
    <property type="project" value="ProtInc"/>
</dbReference>
<dbReference type="GO" id="GO:0020037">
    <property type="term" value="F:heme binding"/>
    <property type="evidence" value="ECO:0007669"/>
    <property type="project" value="InterPro"/>
</dbReference>
<dbReference type="GO" id="GO:0008201">
    <property type="term" value="F:heparin binding"/>
    <property type="evidence" value="ECO:0000314"/>
    <property type="project" value="MGI"/>
</dbReference>
<dbReference type="GO" id="GO:0046872">
    <property type="term" value="F:metal ion binding"/>
    <property type="evidence" value="ECO:0007669"/>
    <property type="project" value="UniProtKB-KW"/>
</dbReference>
<dbReference type="GO" id="GO:0004601">
    <property type="term" value="F:peroxidase activity"/>
    <property type="evidence" value="ECO:0000314"/>
    <property type="project" value="BHF-UCL"/>
</dbReference>
<dbReference type="GO" id="GO:0006952">
    <property type="term" value="P:defense response"/>
    <property type="evidence" value="ECO:0000304"/>
    <property type="project" value="ProtInc"/>
</dbReference>
<dbReference type="GO" id="GO:0042742">
    <property type="term" value="P:defense response to bacterium"/>
    <property type="evidence" value="ECO:0000318"/>
    <property type="project" value="GO_Central"/>
</dbReference>
<dbReference type="GO" id="GO:0050832">
    <property type="term" value="P:defense response to fungus"/>
    <property type="evidence" value="ECO:0007669"/>
    <property type="project" value="Ensembl"/>
</dbReference>
<dbReference type="GO" id="GO:0042744">
    <property type="term" value="P:hydrogen peroxide catabolic process"/>
    <property type="evidence" value="ECO:0000314"/>
    <property type="project" value="BHF-UCL"/>
</dbReference>
<dbReference type="GO" id="GO:0002149">
    <property type="term" value="P:hypochlorous acid biosynthetic process"/>
    <property type="evidence" value="ECO:0007669"/>
    <property type="project" value="Ensembl"/>
</dbReference>
<dbReference type="GO" id="GO:0034374">
    <property type="term" value="P:low-density lipoprotein particle remodeling"/>
    <property type="evidence" value="ECO:0000314"/>
    <property type="project" value="BHF-UCL"/>
</dbReference>
<dbReference type="GO" id="GO:0043066">
    <property type="term" value="P:negative regulation of apoptotic process"/>
    <property type="evidence" value="ECO:0000304"/>
    <property type="project" value="ProtInc"/>
</dbReference>
<dbReference type="GO" id="GO:0019430">
    <property type="term" value="P:removal of superoxide radicals"/>
    <property type="evidence" value="ECO:0007669"/>
    <property type="project" value="Ensembl"/>
</dbReference>
<dbReference type="GO" id="GO:0002679">
    <property type="term" value="P:respiratory burst involved in defense response"/>
    <property type="evidence" value="ECO:0007669"/>
    <property type="project" value="Ensembl"/>
</dbReference>
<dbReference type="GO" id="GO:0032094">
    <property type="term" value="P:response to food"/>
    <property type="evidence" value="ECO:0007669"/>
    <property type="project" value="Ensembl"/>
</dbReference>
<dbReference type="GO" id="GO:1990268">
    <property type="term" value="P:response to gold nanoparticle"/>
    <property type="evidence" value="ECO:0007669"/>
    <property type="project" value="Ensembl"/>
</dbReference>
<dbReference type="GO" id="GO:0032496">
    <property type="term" value="P:response to lipopolysaccharide"/>
    <property type="evidence" value="ECO:0007669"/>
    <property type="project" value="Ensembl"/>
</dbReference>
<dbReference type="GO" id="GO:0009612">
    <property type="term" value="P:response to mechanical stimulus"/>
    <property type="evidence" value="ECO:0007669"/>
    <property type="project" value="Ensembl"/>
</dbReference>
<dbReference type="GO" id="GO:0006979">
    <property type="term" value="P:response to oxidative stress"/>
    <property type="evidence" value="ECO:0000304"/>
    <property type="project" value="UniProtKB"/>
</dbReference>
<dbReference type="GO" id="GO:0001878">
    <property type="term" value="P:response to yeast"/>
    <property type="evidence" value="ECO:0007669"/>
    <property type="project" value="Ensembl"/>
</dbReference>
<dbReference type="CDD" id="cd09824">
    <property type="entry name" value="myeloperoxidase_like"/>
    <property type="match status" value="1"/>
</dbReference>
<dbReference type="FunFam" id="1.10.640.10:FF:000030">
    <property type="entry name" value="Myeloperoxidase"/>
    <property type="match status" value="1"/>
</dbReference>
<dbReference type="Gene3D" id="1.10.640.10">
    <property type="entry name" value="Haem peroxidase domain superfamily, animal type"/>
    <property type="match status" value="1"/>
</dbReference>
<dbReference type="InterPro" id="IPR019791">
    <property type="entry name" value="Haem_peroxidase_animal"/>
</dbReference>
<dbReference type="InterPro" id="IPR010255">
    <property type="entry name" value="Haem_peroxidase_sf"/>
</dbReference>
<dbReference type="InterPro" id="IPR037120">
    <property type="entry name" value="Haem_peroxidase_sf_animal"/>
</dbReference>
<dbReference type="PANTHER" id="PTHR11475:SF108">
    <property type="entry name" value="MYELOPEROXIDASE"/>
    <property type="match status" value="1"/>
</dbReference>
<dbReference type="PANTHER" id="PTHR11475">
    <property type="entry name" value="OXIDASE/PEROXIDASE"/>
    <property type="match status" value="1"/>
</dbReference>
<dbReference type="Pfam" id="PF03098">
    <property type="entry name" value="An_peroxidase"/>
    <property type="match status" value="1"/>
</dbReference>
<dbReference type="PRINTS" id="PR00457">
    <property type="entry name" value="ANPEROXIDASE"/>
</dbReference>
<dbReference type="SUPFAM" id="SSF48113">
    <property type="entry name" value="Heme-dependent peroxidases"/>
    <property type="match status" value="1"/>
</dbReference>
<dbReference type="PROSITE" id="PS00435">
    <property type="entry name" value="PEROXIDASE_1"/>
    <property type="match status" value="1"/>
</dbReference>
<dbReference type="PROSITE" id="PS50292">
    <property type="entry name" value="PEROXIDASE_3"/>
    <property type="match status" value="1"/>
</dbReference>
<feature type="signal peptide" evidence="8 9">
    <location>
        <begin position="1"/>
        <end position="48"/>
    </location>
</feature>
<feature type="chain" id="PRO_0000023651" description="89 kDa myeloperoxidase">
    <location>
        <begin position="49"/>
        <end position="745"/>
    </location>
</feature>
<feature type="chain" id="PRO_0000023653" description="84 kDa myeloperoxidase">
    <location>
        <begin position="155"/>
        <end position="745"/>
    </location>
</feature>
<feature type="chain" id="PRO_0000023654" description="Myeloperoxidase">
    <location>
        <begin position="165"/>
        <end position="745"/>
    </location>
</feature>
<feature type="chain" id="PRO_0000023655" description="Myeloperoxidase light chain">
    <location>
        <begin position="165"/>
        <end position="278"/>
    </location>
</feature>
<feature type="chain" id="PRO_0000023656" description="Myeloperoxidase heavy chain">
    <location>
        <begin position="279"/>
        <end position="745"/>
    </location>
</feature>
<feature type="active site" description="Proton acceptor">
    <location>
        <position position="261"/>
    </location>
</feature>
<feature type="binding site" description="covalent" evidence="10 13 24 31">
    <location>
        <position position="260"/>
    </location>
    <ligand>
        <name>heme b</name>
        <dbReference type="ChEBI" id="CHEBI:60344"/>
    </ligand>
</feature>
<feature type="binding site">
    <location>
        <position position="262"/>
    </location>
    <ligand>
        <name>Ca(2+)</name>
        <dbReference type="ChEBI" id="CHEBI:29108"/>
    </ligand>
</feature>
<feature type="binding site" evidence="2 3 13 24 25 27 28 29 30">
    <location>
        <position position="334"/>
    </location>
    <ligand>
        <name>Ca(2+)</name>
        <dbReference type="ChEBI" id="CHEBI:29108"/>
    </ligand>
</feature>
<feature type="binding site" evidence="2 3 13 24 25 27 28 29 30">
    <location>
        <position position="336"/>
    </location>
    <ligand>
        <name>Ca(2+)</name>
        <dbReference type="ChEBI" id="CHEBI:29108"/>
    </ligand>
</feature>
<feature type="binding site" evidence="2 3 13 24 25 27 28 29 30">
    <location>
        <position position="338"/>
    </location>
    <ligand>
        <name>Ca(2+)</name>
        <dbReference type="ChEBI" id="CHEBI:29108"/>
    </ligand>
</feature>
<feature type="binding site" evidence="2 3 13 24 25 27 28 29 30">
    <location>
        <position position="340"/>
    </location>
    <ligand>
        <name>Ca(2+)</name>
        <dbReference type="ChEBI" id="CHEBI:29108"/>
    </ligand>
</feature>
<feature type="binding site" description="covalent" evidence="10 13 24 31">
    <location>
        <position position="408"/>
    </location>
    <ligand>
        <name>heme b</name>
        <dbReference type="ChEBI" id="CHEBI:60344"/>
    </ligand>
</feature>
<feature type="binding site" description="covalent" evidence="10 13 24 31">
    <location>
        <position position="409"/>
    </location>
    <ligand>
        <name>heme b</name>
        <dbReference type="ChEBI" id="CHEBI:60344"/>
    </ligand>
</feature>
<feature type="binding site" description="axial binding residue" evidence="10 13 24 31">
    <location>
        <position position="502"/>
    </location>
    <ligand>
        <name>heme b</name>
        <dbReference type="ChEBI" id="CHEBI:60344"/>
    </ligand>
    <ligandPart>
        <name>Fe</name>
        <dbReference type="ChEBI" id="CHEBI:18248"/>
    </ligandPart>
</feature>
<feature type="site" description="Transition state stabilizer">
    <location>
        <position position="405"/>
    </location>
</feature>
<feature type="modified residue" description="Cysteine sulfenic acid (-SOH)" evidence="13">
    <location>
        <position position="316"/>
    </location>
</feature>
<feature type="glycosylation site" description="N-linked (GlcNAc...) asparagine" evidence="4">
    <location>
        <position position="139"/>
    </location>
</feature>
<feature type="glycosylation site" description="N-linked (GlcNAc...) asparagine" evidence="5 8">
    <location>
        <position position="323"/>
    </location>
</feature>
<feature type="glycosylation site" description="N-linked (GlcNAc...) asparagine" evidence="7 8 10 31">
    <location>
        <position position="355"/>
    </location>
</feature>
<feature type="glycosylation site" description="N-linked (GlcNAc...) asparagine" evidence="7 8 10 31">
    <location>
        <position position="391"/>
    </location>
</feature>
<feature type="glycosylation site" id="CAR_000220" description="N-linked (GlcNAc...) asparagine" evidence="4 5 8 10 31">
    <location>
        <position position="483"/>
    </location>
</feature>
<feature type="glycosylation site" description="N-linked (GlcNAc...) asparagine" evidence="8">
    <location>
        <position position="729"/>
    </location>
</feature>
<feature type="disulfide bond">
    <location>
        <begin position="167"/>
        <end position="180"/>
    </location>
</feature>
<feature type="disulfide bond">
    <location>
        <begin position="281"/>
        <end position="291"/>
    </location>
</feature>
<feature type="disulfide bond">
    <location>
        <begin position="285"/>
        <end position="309"/>
    </location>
</feature>
<feature type="disulfide bond" description="Interchain">
    <location>
        <position position="319"/>
    </location>
</feature>
<feature type="disulfide bond">
    <location>
        <begin position="387"/>
        <end position="398"/>
    </location>
</feature>
<feature type="disulfide bond">
    <location>
        <begin position="606"/>
        <end position="663"/>
    </location>
</feature>
<feature type="disulfide bond">
    <location>
        <begin position="704"/>
        <end position="730"/>
    </location>
</feature>
<feature type="splice variant" id="VSP_007206" description="In isoform H14." evidence="21">
    <location>
        <begin position="1"/>
        <end position="95"/>
    </location>
</feature>
<feature type="splice variant" id="VSP_007207" description="In isoform H7." evidence="21">
    <original>N</original>
    <variation>NRCGWLGVAAGTGLREASRTPQASRCQRPVLPC</variation>
    <location>
        <position position="182"/>
    </location>
</feature>
<feature type="sequence variant" id="VAR_023995" description="In dbSNP:rs7208693." evidence="20">
    <original>V</original>
    <variation>F</variation>
    <location>
        <position position="53"/>
    </location>
</feature>
<feature type="sequence variant" id="VAR_015377" description="In MPOD; affects proteolytic processing and secretion; dbSNP:rs78950939." evidence="18">
    <original>Y</original>
    <variation>C</variation>
    <location>
        <position position="173"/>
    </location>
</feature>
<feature type="sequence variant" id="VAR_015378" description="In MPOD; dbSNP:rs56378716." evidence="17">
    <original>M</original>
    <variation>T</variation>
    <location>
        <position position="251"/>
    </location>
</feature>
<feature type="sequence variant" id="VAR_036517" description="In a colorectal cancer sample; somatic mutation; dbSNP:rs762688992." evidence="6">
    <original>R</original>
    <variation>Q</variation>
    <location>
        <position position="447"/>
    </location>
</feature>
<feature type="sequence variant" id="VAR_015379" description="In MPOD; suppress post-translational processing; dbSNP:rs119468010." evidence="12 14 15 16">
    <original>R</original>
    <variation>W</variation>
    <location>
        <position position="569"/>
    </location>
</feature>
<feature type="sequence variant" id="VAR_023996" description="In dbSNP:rs35670089." evidence="20">
    <original>R</original>
    <variation>C</variation>
    <location>
        <position position="604"/>
    </location>
</feature>
<feature type="sequence variant" id="VAR_023997" description="In dbSNP:rs35702888." evidence="20">
    <original>E</original>
    <variation>Q</variation>
    <location>
        <position position="683"/>
    </location>
</feature>
<feature type="sequence variant" id="VAR_012066" description="In dbSNP:rs2759." evidence="20">
    <original>I</original>
    <variation>V</variation>
    <location>
        <position position="717"/>
    </location>
</feature>
<feature type="sequence conflict" description="In Ref. 4; CAA28565 and 7; CAA33438." evidence="22" ref="4 7">
    <original>L</original>
    <variation>V</variation>
    <location>
        <position position="36"/>
    </location>
</feature>
<feature type="turn" evidence="34">
    <location>
        <begin position="159"/>
        <end position="164"/>
    </location>
</feature>
<feature type="strand" evidence="34">
    <location>
        <begin position="181"/>
        <end position="185"/>
    </location>
</feature>
<feature type="turn" evidence="34">
    <location>
        <begin position="186"/>
        <end position="189"/>
    </location>
</feature>
<feature type="strand" evidence="34">
    <location>
        <begin position="191"/>
        <end position="194"/>
    </location>
</feature>
<feature type="strand" evidence="34">
    <location>
        <begin position="206"/>
        <end position="208"/>
    </location>
</feature>
<feature type="strand" evidence="33">
    <location>
        <begin position="218"/>
        <end position="223"/>
    </location>
</feature>
<feature type="helix" evidence="34">
    <location>
        <begin position="227"/>
        <end position="234"/>
    </location>
</feature>
<feature type="helix" evidence="34">
    <location>
        <begin position="239"/>
        <end position="241"/>
    </location>
</feature>
<feature type="strand" evidence="34">
    <location>
        <begin position="244"/>
        <end position="249"/>
    </location>
</feature>
<feature type="helix" evidence="34">
    <location>
        <begin position="250"/>
        <end position="263"/>
    </location>
</feature>
<feature type="helix" evidence="34">
    <location>
        <begin position="271"/>
        <end position="275"/>
    </location>
</feature>
<feature type="turn" evidence="34">
    <location>
        <begin position="281"/>
        <end position="283"/>
    </location>
</feature>
<feature type="strand" evidence="34">
    <location>
        <begin position="317"/>
        <end position="319"/>
    </location>
</feature>
<feature type="strand" evidence="34">
    <location>
        <begin position="323"/>
        <end position="325"/>
    </location>
</feature>
<feature type="strand" evidence="34">
    <location>
        <begin position="329"/>
        <end position="331"/>
    </location>
</feature>
<feature type="strand" evidence="34">
    <location>
        <begin position="335"/>
        <end position="338"/>
    </location>
</feature>
<feature type="helix" evidence="34">
    <location>
        <begin position="340"/>
        <end position="343"/>
    </location>
</feature>
<feature type="helix" evidence="34">
    <location>
        <begin position="347"/>
        <end position="352"/>
    </location>
</feature>
<feature type="strand" evidence="34">
    <location>
        <begin position="357"/>
        <end position="360"/>
    </location>
</feature>
<feature type="strand" evidence="33">
    <location>
        <begin position="371"/>
        <end position="374"/>
    </location>
</feature>
<feature type="helix" evidence="34">
    <location>
        <begin position="387"/>
        <end position="389"/>
    </location>
</feature>
<feature type="turn" evidence="34">
    <location>
        <begin position="392"/>
        <end position="394"/>
    </location>
</feature>
<feature type="strand" evidence="33">
    <location>
        <begin position="401"/>
        <end position="403"/>
    </location>
</feature>
<feature type="turn" evidence="34">
    <location>
        <begin position="404"/>
        <end position="407"/>
    </location>
</feature>
<feature type="helix" evidence="34">
    <location>
        <begin position="410"/>
        <end position="433"/>
    </location>
</feature>
<feature type="helix" evidence="34">
    <location>
        <begin position="439"/>
        <end position="460"/>
    </location>
</feature>
<feature type="helix" evidence="34">
    <location>
        <begin position="463"/>
        <end position="467"/>
    </location>
</feature>
<feature type="helix" evidence="34">
    <location>
        <begin position="469"/>
        <end position="475"/>
    </location>
</feature>
<feature type="helix" evidence="34">
    <location>
        <begin position="492"/>
        <end position="497"/>
    </location>
</feature>
<feature type="helix" evidence="34">
    <location>
        <begin position="498"/>
        <end position="504"/>
    </location>
</feature>
<feature type="strand" evidence="34">
    <location>
        <begin position="507"/>
        <end position="510"/>
    </location>
</feature>
<feature type="strand" evidence="34">
    <location>
        <begin position="516"/>
        <end position="518"/>
    </location>
</feature>
<feature type="strand" evidence="34">
    <location>
        <begin position="523"/>
        <end position="526"/>
    </location>
</feature>
<feature type="helix" evidence="34">
    <location>
        <begin position="527"/>
        <end position="529"/>
    </location>
</feature>
<feature type="turn" evidence="34">
    <location>
        <begin position="530"/>
        <end position="532"/>
    </location>
</feature>
<feature type="helix" evidence="34">
    <location>
        <begin position="534"/>
        <end position="539"/>
    </location>
</feature>
<feature type="helix" evidence="34">
    <location>
        <begin position="544"/>
        <end position="552"/>
    </location>
</feature>
<feature type="strand" evidence="34">
    <location>
        <begin position="553"/>
        <end position="556"/>
    </location>
</feature>
<feature type="helix" evidence="34">
    <location>
        <begin position="566"/>
        <end position="569"/>
    </location>
</feature>
<feature type="turn" evidence="34">
    <location>
        <begin position="573"/>
        <end position="576"/>
    </location>
</feature>
<feature type="strand" evidence="34">
    <location>
        <begin position="577"/>
        <end position="579"/>
    </location>
</feature>
<feature type="helix" evidence="34">
    <location>
        <begin position="583"/>
        <end position="593"/>
    </location>
</feature>
<feature type="helix" evidence="34">
    <location>
        <begin position="599"/>
        <end position="605"/>
    </location>
</feature>
<feature type="helix" evidence="34">
    <location>
        <begin position="614"/>
        <end position="621"/>
    </location>
</feature>
<feature type="helix" evidence="34">
    <location>
        <begin position="624"/>
        <end position="634"/>
    </location>
</feature>
<feature type="helix" evidence="34">
    <location>
        <begin position="637"/>
        <end position="639"/>
    </location>
</feature>
<feature type="helix" evidence="34">
    <location>
        <begin position="642"/>
        <end position="648"/>
    </location>
</feature>
<feature type="strand" evidence="34">
    <location>
        <begin position="655"/>
        <end position="657"/>
    </location>
</feature>
<feature type="helix" evidence="34">
    <location>
        <begin position="659"/>
        <end position="674"/>
    </location>
</feature>
<feature type="turn" evidence="32">
    <location>
        <begin position="683"/>
        <end position="685"/>
    </location>
</feature>
<feature type="helix" evidence="34">
    <location>
        <begin position="688"/>
        <end position="694"/>
    </location>
</feature>
<feature type="helix" evidence="34">
    <location>
        <begin position="699"/>
        <end position="706"/>
    </location>
</feature>
<feature type="strand" evidence="34">
    <location>
        <begin position="711"/>
        <end position="713"/>
    </location>
</feature>
<feature type="turn" evidence="34">
    <location>
        <begin position="717"/>
        <end position="719"/>
    </location>
</feature>
<feature type="turn" evidence="34">
    <location>
        <begin position="723"/>
        <end position="726"/>
    </location>
</feature>
<feature type="strand" evidence="34">
    <location>
        <begin position="727"/>
        <end position="729"/>
    </location>
</feature>
<feature type="helix" evidence="34">
    <location>
        <begin position="730"/>
        <end position="732"/>
    </location>
</feature>
<feature type="helix" evidence="34">
    <location>
        <begin position="739"/>
        <end position="741"/>
    </location>
</feature>
<organism>
    <name type="scientific">Homo sapiens</name>
    <name type="common">Human</name>
    <dbReference type="NCBI Taxonomy" id="9606"/>
    <lineage>
        <taxon>Eukaryota</taxon>
        <taxon>Metazoa</taxon>
        <taxon>Chordata</taxon>
        <taxon>Craniata</taxon>
        <taxon>Vertebrata</taxon>
        <taxon>Euteleostomi</taxon>
        <taxon>Mammalia</taxon>
        <taxon>Eutheria</taxon>
        <taxon>Euarchontoglires</taxon>
        <taxon>Primates</taxon>
        <taxon>Haplorrhini</taxon>
        <taxon>Catarrhini</taxon>
        <taxon>Hominidae</taxon>
        <taxon>Homo</taxon>
    </lineage>
</organism>
<name>PERM_HUMAN</name>